<organism>
    <name type="scientific">Vigna radiata var. radiata</name>
    <name type="common">Mung bean</name>
    <name type="synonym">Phaseolus aureus</name>
    <dbReference type="NCBI Taxonomy" id="3916"/>
    <lineage>
        <taxon>Eukaryota</taxon>
        <taxon>Viridiplantae</taxon>
        <taxon>Streptophyta</taxon>
        <taxon>Embryophyta</taxon>
        <taxon>Tracheophyta</taxon>
        <taxon>Spermatophyta</taxon>
        <taxon>Magnoliopsida</taxon>
        <taxon>eudicotyledons</taxon>
        <taxon>Gunneridae</taxon>
        <taxon>Pentapetalae</taxon>
        <taxon>rosids</taxon>
        <taxon>fabids</taxon>
        <taxon>Fabales</taxon>
        <taxon>Fabaceae</taxon>
        <taxon>Papilionoideae</taxon>
        <taxon>50 kb inversion clade</taxon>
        <taxon>NPAAA clade</taxon>
        <taxon>indigoferoid/millettioid clade</taxon>
        <taxon>Phaseoleae</taxon>
        <taxon>Vigna</taxon>
    </lineage>
</organism>
<proteinExistence type="evidence at transcript level"/>
<feature type="chain" id="PRO_0000185413" description="Omega-3 fatty acid desaturase, endoplasmic reticulum">
    <location>
        <begin position="1"/>
        <end position="380"/>
    </location>
</feature>
<feature type="transmembrane region" description="Helical" evidence="1">
    <location>
        <begin position="59"/>
        <end position="78"/>
    </location>
</feature>
<feature type="transmembrane region" description="Helical" evidence="1">
    <location>
        <begin position="208"/>
        <end position="231"/>
    </location>
</feature>
<feature type="transmembrane region" description="Helical" evidence="1">
    <location>
        <begin position="238"/>
        <end position="256"/>
    </location>
</feature>
<feature type="short sequence motif" description="Histidine box-1">
    <location>
        <begin position="97"/>
        <end position="101"/>
    </location>
</feature>
<feature type="short sequence motif" description="Histidine box-2">
    <location>
        <begin position="133"/>
        <end position="137"/>
    </location>
</feature>
<feature type="short sequence motif" description="Histidine box-3">
    <location>
        <begin position="300"/>
        <end position="304"/>
    </location>
</feature>
<accession>P32291</accession>
<keyword id="KW-0256">Endoplasmic reticulum</keyword>
<keyword id="KW-0275">Fatty acid biosynthesis</keyword>
<keyword id="KW-0276">Fatty acid metabolism</keyword>
<keyword id="KW-0444">Lipid biosynthesis</keyword>
<keyword id="KW-0443">Lipid metabolism</keyword>
<keyword id="KW-0472">Membrane</keyword>
<keyword id="KW-0560">Oxidoreductase</keyword>
<keyword id="KW-1185">Reference proteome</keyword>
<keyword id="KW-0812">Transmembrane</keyword>
<keyword id="KW-1133">Transmembrane helix</keyword>
<protein>
    <recommendedName>
        <fullName>Omega-3 fatty acid desaturase, endoplasmic reticulum</fullName>
        <ecNumber>1.14.19.-</ecNumber>
    </recommendedName>
    <alternativeName>
        <fullName>Indole-3-acetic acid-induced protein ARG1</fullName>
    </alternativeName>
</protein>
<evidence type="ECO:0000255" key="1"/>
<evidence type="ECO:0000305" key="2"/>
<name>FAD3E_VIGRR</name>
<comment type="function">
    <text>Microsomal (ER) omega-3 fatty acid desaturase introduces the third double bond in the biosynthesis of 18:3 fatty acids, important constituents of plant membranes. It is thought to use cytochrome b5 as an electron donor and to act on fatty acids esterified to phosphatidylcholine and, possibly, other phospholipids.</text>
</comment>
<comment type="pathway">
    <text>Lipid metabolism; polyunsaturated fatty acid biosynthesis.</text>
</comment>
<comment type="subcellular location">
    <subcellularLocation>
        <location>Endoplasmic reticulum membrane</location>
        <topology>Multi-pass membrane protein</topology>
    </subcellularLocation>
</comment>
<comment type="induction">
    <text>By auxin, ethylene and wounding.</text>
</comment>
<comment type="domain">
    <text>The histidine box domains may contain the active site and/or be involved in metal ion binding.</text>
</comment>
<comment type="similarity">
    <text evidence="2">Belongs to the fatty acid desaturase type 1 family.</text>
</comment>
<dbReference type="EC" id="1.14.19.-"/>
<dbReference type="EMBL" id="D14410">
    <property type="protein sequence ID" value="BAA03306.1"/>
    <property type="molecule type" value="mRNA"/>
</dbReference>
<dbReference type="PIR" id="T10898">
    <property type="entry name" value="T10898"/>
</dbReference>
<dbReference type="RefSeq" id="NP_001304084.1">
    <property type="nucleotide sequence ID" value="NM_001317155.1"/>
</dbReference>
<dbReference type="SMR" id="P32291"/>
<dbReference type="STRING" id="3916.P32291"/>
<dbReference type="GeneID" id="106775023"/>
<dbReference type="KEGG" id="vra:106775023"/>
<dbReference type="OrthoDB" id="1461976at2759"/>
<dbReference type="UniPathway" id="UPA00658"/>
<dbReference type="Proteomes" id="UP000087766">
    <property type="component" value="Chromosome 10"/>
</dbReference>
<dbReference type="GO" id="GO:0005789">
    <property type="term" value="C:endoplasmic reticulum membrane"/>
    <property type="evidence" value="ECO:0007669"/>
    <property type="project" value="UniProtKB-SubCell"/>
</dbReference>
<dbReference type="GO" id="GO:0016717">
    <property type="term" value="F:oxidoreductase activity, acting on paired donors, with oxidation of a pair of donors resulting in the reduction of molecular oxygen to two molecules of water"/>
    <property type="evidence" value="ECO:0007669"/>
    <property type="project" value="InterPro"/>
</dbReference>
<dbReference type="GO" id="GO:0006636">
    <property type="term" value="P:unsaturated fatty acid biosynthetic process"/>
    <property type="evidence" value="ECO:0007669"/>
    <property type="project" value="UniProtKB-UniPathway"/>
</dbReference>
<dbReference type="CDD" id="cd03507">
    <property type="entry name" value="Delta12-FADS-like"/>
    <property type="match status" value="1"/>
</dbReference>
<dbReference type="InterPro" id="IPR005804">
    <property type="entry name" value="FA_desaturase_dom"/>
</dbReference>
<dbReference type="InterPro" id="IPR021863">
    <property type="entry name" value="FAS_N"/>
</dbReference>
<dbReference type="InterPro" id="IPR012171">
    <property type="entry name" value="Fatty_acid_desaturase"/>
</dbReference>
<dbReference type="PANTHER" id="PTHR32100">
    <property type="entry name" value="OMEGA-6 FATTY ACID DESATURASE, CHLOROPLASTIC"/>
    <property type="match status" value="1"/>
</dbReference>
<dbReference type="Pfam" id="PF11960">
    <property type="entry name" value="DUF3474"/>
    <property type="match status" value="1"/>
</dbReference>
<dbReference type="Pfam" id="PF00487">
    <property type="entry name" value="FA_desaturase"/>
    <property type="match status" value="1"/>
</dbReference>
<gene>
    <name type="primary">ARG1</name>
</gene>
<sequence length="380" mass="43996">MIQAQTLQHFGNGAREGDQSYFDPGAPPPFKIADIRAAIPKHCWEKSTLRSLSYVLRDVLVVTALAASAISFNSWFFWPLYWPAQGTMFWALFVLGHDCGHGSFSNSSKLNSFVGHILHSLILVPYNGWRISHRTHHQNHGHVEKDESWVPLTEKVYKNLDDMTRMLRYSFPFPIFAYPFYLWNRSPGKEGSHFNPYSNLFSPGERKGVVTSTLCWGIVLSVLLYLSLTIGPIFMLKLYGVPYLIFVMWLDFVTYLHHHGYTHKLPWYRGQEWSYLRGGLTTVDRDYGWINNVHHDIGTHVIHHLFPQIPHYHLVEATKSAKSVLGKYYREPQKSGPLPFHLLKYLLQSISQDHFVSDTGDIVYYQTDPKLHQDSWTKSK</sequence>
<reference key="1">
    <citation type="journal article" date="1992" name="Plant Cell Physiol.">
        <title>Novel mRNA sequences induced by indole-3-acetic acid in sections of elongating hypocotyls of mung bean (Vigna radiata).</title>
        <authorList>
            <person name="Yamamoto K.T."/>
            <person name="Mori H."/>
            <person name="Imaseki H."/>
        </authorList>
    </citation>
    <scope>NUCLEOTIDE SEQUENCE [MRNA]</scope>
    <source>
        <tissue>Hypocotyl</tissue>
    </source>
</reference>